<keyword id="KW-0175">Coiled coil</keyword>
<keyword id="KW-0536">Nodulation</keyword>
<keyword id="KW-0539">Nucleus</keyword>
<keyword id="KW-1185">Reference proteome</keyword>
<dbReference type="EMBL" id="EF117279">
    <property type="protein sequence ID" value="ABN45743.1"/>
    <property type="molecule type" value="Genomic_DNA"/>
</dbReference>
<dbReference type="EMBL" id="EF569224">
    <property type="protein sequence ID" value="ABU63671.1"/>
    <property type="molecule type" value="mRNA"/>
</dbReference>
<dbReference type="EMBL" id="CM001221">
    <property type="protein sequence ID" value="AES95561.1"/>
    <property type="molecule type" value="Genomic_DNA"/>
</dbReference>
<dbReference type="RefSeq" id="XP_003612603.1">
    <property type="nucleotide sequence ID" value="XM_003612555.2"/>
</dbReference>
<dbReference type="SMR" id="A7TUE1"/>
<dbReference type="STRING" id="3880.A7TUE1"/>
<dbReference type="iPTMnet" id="A7TUE1"/>
<dbReference type="PaxDb" id="3880-AES95561"/>
<dbReference type="EnsemblPlants" id="rna29738">
    <property type="protein sequence ID" value="RHN54664.1"/>
    <property type="gene ID" value="gene29738"/>
</dbReference>
<dbReference type="Gramene" id="rna29738">
    <property type="protein sequence ID" value="RHN54664.1"/>
    <property type="gene ID" value="gene29738"/>
</dbReference>
<dbReference type="eggNOG" id="ENOG502QQ45">
    <property type="taxonomic scope" value="Eukaryota"/>
</dbReference>
<dbReference type="OMA" id="WLMNGEA"/>
<dbReference type="Proteomes" id="UP000002051">
    <property type="component" value="Chromosome 5"/>
</dbReference>
<dbReference type="ExpressionAtlas" id="A7TUE1">
    <property type="expression patterns" value="differential"/>
</dbReference>
<dbReference type="GO" id="GO:0005634">
    <property type="term" value="C:nucleus"/>
    <property type="evidence" value="ECO:0000314"/>
    <property type="project" value="UniProtKB"/>
</dbReference>
<dbReference type="GO" id="GO:0042803">
    <property type="term" value="F:protein homodimerization activity"/>
    <property type="evidence" value="ECO:0000353"/>
    <property type="project" value="UniProtKB"/>
</dbReference>
<dbReference type="GO" id="GO:0043565">
    <property type="term" value="F:sequence-specific DNA binding"/>
    <property type="evidence" value="ECO:0007669"/>
    <property type="project" value="InterPro"/>
</dbReference>
<dbReference type="GO" id="GO:0036377">
    <property type="term" value="P:arbuscular mycorrhizal association"/>
    <property type="evidence" value="ECO:0000315"/>
    <property type="project" value="UniProtKB"/>
</dbReference>
<dbReference type="GO" id="GO:0009877">
    <property type="term" value="P:nodulation"/>
    <property type="evidence" value="ECO:0000315"/>
    <property type="project" value="UniProtKB"/>
</dbReference>
<dbReference type="InterPro" id="IPR040036">
    <property type="entry name" value="CYCLOPS"/>
</dbReference>
<dbReference type="PANTHER" id="PTHR36890">
    <property type="entry name" value="PROTEIN CYCLOPS"/>
    <property type="match status" value="1"/>
</dbReference>
<dbReference type="PANTHER" id="PTHR36890:SF1">
    <property type="entry name" value="PROTEIN CYCLOPS"/>
    <property type="match status" value="1"/>
</dbReference>
<name>CCLOP_MEDTR</name>
<organism>
    <name type="scientific">Medicago truncatula</name>
    <name type="common">Barrel medic</name>
    <name type="synonym">Medicago tribuloides</name>
    <dbReference type="NCBI Taxonomy" id="3880"/>
    <lineage>
        <taxon>Eukaryota</taxon>
        <taxon>Viridiplantae</taxon>
        <taxon>Streptophyta</taxon>
        <taxon>Embryophyta</taxon>
        <taxon>Tracheophyta</taxon>
        <taxon>Spermatophyta</taxon>
        <taxon>Magnoliopsida</taxon>
        <taxon>eudicotyledons</taxon>
        <taxon>Gunneridae</taxon>
        <taxon>Pentapetalae</taxon>
        <taxon>rosids</taxon>
        <taxon>fabids</taxon>
        <taxon>Fabales</taxon>
        <taxon>Fabaceae</taxon>
        <taxon>Papilionoideae</taxon>
        <taxon>50 kb inversion clade</taxon>
        <taxon>NPAAA clade</taxon>
        <taxon>Hologalegina</taxon>
        <taxon>IRL clade</taxon>
        <taxon>Trifolieae</taxon>
        <taxon>Medicago</taxon>
    </lineage>
</organism>
<accession>A7TUE1</accession>
<reference key="1">
    <citation type="journal article" date="2007" name="Mol. Plant Microbe Interact.">
        <title>A novel nuclear protein interacts with the symbiotic DMI3 calcium- and calmodulin-dependent protein kinase of Medicago truncatula.</title>
        <authorList>
            <person name="Messinese E."/>
            <person name="Mun J.H."/>
            <person name="Yeun L.H."/>
            <person name="Jayaraman D."/>
            <person name="Rouge P."/>
            <person name="Barre A."/>
            <person name="Lougnon G."/>
            <person name="Schornack S."/>
            <person name="Bono J.J."/>
            <person name="Cook D.R."/>
            <person name="Ane J.M."/>
        </authorList>
    </citation>
    <scope>NUCLEOTIDE SEQUENCE [GENOMIC DNA]</scope>
    <scope>HOMODIMERIZATION</scope>
    <scope>INTERACTION WITH CCAMK</scope>
    <scope>SUBCELLULAR LOCATION</scope>
    <scope>TISSUE SPECIFICITY</scope>
</reference>
<reference key="2">
    <citation type="journal article" date="2008" name="Proc. Natl. Acad. Sci. U.S.A.">
        <title>CYCLOPS, a mediator of symbiotic intracellular accommodation.</title>
        <authorList>
            <person name="Yano K."/>
            <person name="Yoshida S."/>
            <person name="Mueller J."/>
            <person name="Singh S."/>
            <person name="Banba M."/>
            <person name="Vickers K."/>
            <person name="Markmann K."/>
            <person name="White C."/>
            <person name="Schuller B."/>
            <person name="Sato S."/>
            <person name="Asamizu E."/>
            <person name="Tabata S."/>
            <person name="Murooka Y."/>
            <person name="Perry J."/>
            <person name="Wang T.L."/>
            <person name="Kawaguchi M."/>
            <person name="Imaizumi-Anraku H."/>
            <person name="Hayashi M."/>
            <person name="Parniske M."/>
        </authorList>
    </citation>
    <scope>NUCLEOTIDE SEQUENCE [MRNA]</scope>
</reference>
<reference key="3">
    <citation type="journal article" date="2011" name="Nature">
        <title>The Medicago genome provides insight into the evolution of rhizobial symbioses.</title>
        <authorList>
            <person name="Young N.D."/>
            <person name="Debelle F."/>
            <person name="Oldroyd G.E.D."/>
            <person name="Geurts R."/>
            <person name="Cannon S.B."/>
            <person name="Udvardi M.K."/>
            <person name="Benedito V.A."/>
            <person name="Mayer K.F.X."/>
            <person name="Gouzy J."/>
            <person name="Schoof H."/>
            <person name="Van de Peer Y."/>
            <person name="Proost S."/>
            <person name="Cook D.R."/>
            <person name="Meyers B.C."/>
            <person name="Spannagl M."/>
            <person name="Cheung F."/>
            <person name="De Mita S."/>
            <person name="Krishnakumar V."/>
            <person name="Gundlach H."/>
            <person name="Zhou S."/>
            <person name="Mudge J."/>
            <person name="Bharti A.K."/>
            <person name="Murray J.D."/>
            <person name="Naoumkina M.A."/>
            <person name="Rosen B."/>
            <person name="Silverstein K.A.T."/>
            <person name="Tang H."/>
            <person name="Rombauts S."/>
            <person name="Zhao P.X."/>
            <person name="Zhou P."/>
            <person name="Barbe V."/>
            <person name="Bardou P."/>
            <person name="Bechner M."/>
            <person name="Bellec A."/>
            <person name="Berger A."/>
            <person name="Berges H."/>
            <person name="Bidwell S."/>
            <person name="Bisseling T."/>
            <person name="Choisne N."/>
            <person name="Couloux A."/>
            <person name="Denny R."/>
            <person name="Deshpande S."/>
            <person name="Dai X."/>
            <person name="Doyle J.J."/>
            <person name="Dudez A.-M."/>
            <person name="Farmer A.D."/>
            <person name="Fouteau S."/>
            <person name="Franken C."/>
            <person name="Gibelin C."/>
            <person name="Gish J."/>
            <person name="Goldstein S."/>
            <person name="Gonzalez A.J."/>
            <person name="Green P.J."/>
            <person name="Hallab A."/>
            <person name="Hartog M."/>
            <person name="Hua A."/>
            <person name="Humphray S.J."/>
            <person name="Jeong D.-H."/>
            <person name="Jing Y."/>
            <person name="Jocker A."/>
            <person name="Kenton S.M."/>
            <person name="Kim D.-J."/>
            <person name="Klee K."/>
            <person name="Lai H."/>
            <person name="Lang C."/>
            <person name="Lin S."/>
            <person name="Macmil S.L."/>
            <person name="Magdelenat G."/>
            <person name="Matthews L."/>
            <person name="McCorrison J."/>
            <person name="Monaghan E.L."/>
            <person name="Mun J.-H."/>
            <person name="Najar F.Z."/>
            <person name="Nicholson C."/>
            <person name="Noirot C."/>
            <person name="O'Bleness M."/>
            <person name="Paule C.R."/>
            <person name="Poulain J."/>
            <person name="Prion F."/>
            <person name="Qin B."/>
            <person name="Qu C."/>
            <person name="Retzel E.F."/>
            <person name="Riddle C."/>
            <person name="Sallet E."/>
            <person name="Samain S."/>
            <person name="Samson N."/>
            <person name="Sanders I."/>
            <person name="Saurat O."/>
            <person name="Scarpelli C."/>
            <person name="Schiex T."/>
            <person name="Segurens B."/>
            <person name="Severin A.J."/>
            <person name="Sherrier D.J."/>
            <person name="Shi R."/>
            <person name="Sims S."/>
            <person name="Singer S.R."/>
            <person name="Sinharoy S."/>
            <person name="Sterck L."/>
            <person name="Viollet A."/>
            <person name="Wang B.-B."/>
            <person name="Wang K."/>
            <person name="Wang M."/>
            <person name="Wang X."/>
            <person name="Warfsmann J."/>
            <person name="Weissenbach J."/>
            <person name="White D.D."/>
            <person name="White J.D."/>
            <person name="Wiley G.B."/>
            <person name="Wincker P."/>
            <person name="Xing Y."/>
            <person name="Yang L."/>
            <person name="Yao Z."/>
            <person name="Ying F."/>
            <person name="Zhai J."/>
            <person name="Zhou L."/>
            <person name="Zuber A."/>
            <person name="Denarie J."/>
            <person name="Dixon R.A."/>
            <person name="May G.D."/>
            <person name="Schwartz D.C."/>
            <person name="Rogers J."/>
            <person name="Quetier F."/>
            <person name="Town C.D."/>
            <person name="Roe B.A."/>
        </authorList>
    </citation>
    <scope>NUCLEOTIDE SEQUENCE [LARGE SCALE GENOMIC DNA]</scope>
    <source>
        <strain>cv. Jemalong A17</strain>
    </source>
</reference>
<reference key="4">
    <citation type="journal article" date="2014" name="BMC Genomics">
        <title>An improved genome release (version Mt4.0) for the model legume Medicago truncatula.</title>
        <authorList>
            <person name="Tang H."/>
            <person name="Krishnakumar V."/>
            <person name="Bidwell S."/>
            <person name="Rosen B."/>
            <person name="Chan A."/>
            <person name="Zhou S."/>
            <person name="Gentzbittel L."/>
            <person name="Childs K.L."/>
            <person name="Yandell M."/>
            <person name="Gundlach H."/>
            <person name="Mayer K.F."/>
            <person name="Schwartz D.C."/>
            <person name="Town C.D."/>
        </authorList>
    </citation>
    <scope>GENOME REANNOTATION</scope>
    <source>
        <strain>cv. Jemalong A17</strain>
    </source>
</reference>
<reference key="5">
    <citation type="journal article" date="2007" name="Plant Cell">
        <title>An ERF transcription factor in Medicago truncatula that is essential for Nod factor signal transduction.</title>
        <authorList>
            <person name="Middleton P.H."/>
            <person name="Jakab J."/>
            <person name="Penmetsa R.V."/>
            <person name="Starker C.G."/>
            <person name="Doll J."/>
            <person name="Kalo P."/>
            <person name="Prabhu R."/>
            <person name="Marsh J.F."/>
            <person name="Mitra R.M."/>
            <person name="Kereszt A."/>
            <person name="Dudas B."/>
            <person name="Vandenbosch K."/>
            <person name="Long S.R."/>
            <person name="Cook D.R."/>
            <person name="Kiss G.B."/>
            <person name="Oldroyd G.E."/>
        </authorList>
    </citation>
    <scope>FUNCTION</scope>
    <source>
        <strain>cv. Jemalong A17</strain>
    </source>
</reference>
<reference key="6">
    <citation type="journal article" date="2011" name="Mol. Plant Microbe Interact.">
        <title>IPD3 controls the formation of nitrogen-fixing symbiosomes in pea and Medicago Spp.</title>
        <authorList>
            <person name="Ovchinnikova E."/>
            <person name="Journet E.P."/>
            <person name="Chabaud M."/>
            <person name="Cosson V."/>
            <person name="Ratet P."/>
            <person name="Duc G."/>
            <person name="Fedorova E."/>
            <person name="Liu W."/>
            <person name="den Camp R.O."/>
            <person name="Zhukov V."/>
            <person name="Tikhonovich I."/>
            <person name="Borisov A."/>
            <person name="Bisseling T."/>
            <person name="Limpens E."/>
        </authorList>
    </citation>
    <scope>FUNCTION</scope>
    <scope>SUBCELLULAR LOCATION</scope>
</reference>
<reference key="7">
    <citation type="journal article" date="2011" name="Mol. Plant Microbe Interact.">
        <title>Medicago truncatula IPD3 is a member of the common symbiotic signaling pathway required for rhizobial and mycorrhizal symbioses.</title>
        <authorList>
            <person name="Horvath B."/>
            <person name="Yeun L.H."/>
            <person name="Domonkos A."/>
            <person name="Halasz G."/>
            <person name="Gobbato E."/>
            <person name="Ayaydin F."/>
            <person name="Miro K."/>
            <person name="Hirsch S."/>
            <person name="Sun J."/>
            <person name="Tadege M."/>
            <person name="Ratet P."/>
            <person name="Mysore K.S."/>
            <person name="Ane J.M."/>
            <person name="Oldroyd G.E."/>
            <person name="Kalo P."/>
        </authorList>
    </citation>
    <scope>FUNCTION</scope>
    <scope>HOMODIMERIZATION</scope>
    <scope>INTERACTION WITH CCAMK</scope>
    <scope>DISRUPTION PHENOTYPE</scope>
</reference>
<protein>
    <recommendedName>
        <fullName evidence="8">Protein CYCLOPS</fullName>
        <shortName evidence="8">MtCYCLOPS</shortName>
    </recommendedName>
    <alternativeName>
        <fullName evidence="10">DMI3-interacting protein IPD3</fullName>
    </alternativeName>
    <alternativeName>
        <fullName evidence="7">Interacting protein of DMI3</fullName>
        <shortName evidence="7">MtIPD3</shortName>
    </alternativeName>
    <alternativeName>
        <fullName evidence="9">MtSYM1</fullName>
    </alternativeName>
</protein>
<evidence type="ECO:0000255" key="1"/>
<evidence type="ECO:0000256" key="2">
    <source>
        <dbReference type="SAM" id="MobiDB-lite"/>
    </source>
</evidence>
<evidence type="ECO:0000269" key="3">
    <source>
    </source>
</evidence>
<evidence type="ECO:0000269" key="4">
    <source>
    </source>
</evidence>
<evidence type="ECO:0000269" key="5">
    <source>
    </source>
</evidence>
<evidence type="ECO:0000269" key="6">
    <source>
    </source>
</evidence>
<evidence type="ECO:0000303" key="7">
    <source>
    </source>
</evidence>
<evidence type="ECO:0000303" key="8">
    <source>
    </source>
</evidence>
<evidence type="ECO:0000303" key="9">
    <source>
    </source>
</evidence>
<evidence type="ECO:0000305" key="10"/>
<evidence type="ECO:0000312" key="11">
    <source>
        <dbReference type="EMBL" id="AES95561.1"/>
    </source>
</evidence>
<sequence>MEGRGFSGLYKNSSEELFLKTVMESPIGMPVPTMEMLGFKTVSQSFRTDSEELFKRWLTNDQEGYNSSSMGLNSRLSKRISTEIANMSNQQHIGVASEGRNNDKSCLQNNFLANDVSSDFNFPIRDPVDRELQSSNLFLAKAWFITDQRMTRSRSSELRRRYTEMQNSQAPQGLDSMFMVPEHDTNTIKEELANFNGFDYLSMCELPSQKGTFMSPSNSSSSTFNTHQLVDVDKVSSCVSMLKGTLQRKKLECQVEKEAAEDGLNEIFCIREPLFQSAFNEEESWNQQKLVNVQGDFTDQVNDPGVMQTLEGTTNFVLDGFANQTNQIQGRTASGEPSQSESSAAAPVISSGLDACEGPSNSNQTLGDSSWKQVGESTQNKVRGVREQIMDNLKDDRKRKSLERYGSVTSAVSDGKMDNTKKRRVERSRKMAEAKERNLTPTIPSDMQAILKRCENLEKEVRSLKLNLSFMNRKDSEQTKQIEDLQKQNEDLADEKERLLEEIERILSETGKI</sequence>
<gene>
    <name evidence="8" type="primary">CYCLOPS</name>
    <name evidence="7" type="synonym">IPD3</name>
    <name evidence="11" type="ordered locus">MTR_5g026850</name>
</gene>
<feature type="chain" id="PRO_0000444703" description="Protein CYCLOPS">
    <location>
        <begin position="1"/>
        <end position="513"/>
    </location>
</feature>
<feature type="region of interest" description="Disordered" evidence="2">
    <location>
        <begin position="329"/>
        <end position="380"/>
    </location>
</feature>
<feature type="region of interest" description="Disordered" evidence="2">
    <location>
        <begin position="395"/>
        <end position="435"/>
    </location>
</feature>
<feature type="coiled-coil region" evidence="1">
    <location>
        <begin position="447"/>
        <end position="513"/>
    </location>
</feature>
<feature type="short sequence motif" description="Nuclear localization signal" evidence="1">
    <location>
        <begin position="397"/>
        <end position="400"/>
    </location>
</feature>
<feature type="short sequence motif" description="Nuclear localization signal" evidence="1">
    <location>
        <begin position="421"/>
        <end position="424"/>
    </location>
</feature>
<feature type="compositionally biased region" description="Low complexity" evidence="2">
    <location>
        <begin position="333"/>
        <end position="347"/>
    </location>
</feature>
<feature type="compositionally biased region" description="Polar residues" evidence="2">
    <location>
        <begin position="359"/>
        <end position="380"/>
    </location>
</feature>
<comment type="function">
    <text evidence="3 5 6">Involved symbiotic signaling. Required for root infection by symbiotic rhizobia, infection thread (IT) formation, and nodule development. Required for proper induction of early nodulin gene expression. Probably not involved in nodule organogenesis. Involved in arbuscular mycorrhizal (AM) symbiosis. Required for fungal infection of the outer cortical cell layers, and for arbuscule development during the AM symbiosis. Acts downstream of CCAMK (PubMed:21692638). Required for symbiosome formation (i.e. the release of the bacteria from the ITs) and subsequent symbiosome development. Required for the expression of the nodule-specific RPG gene, which controls proper IT growth and is essential for symbiosome formation (PubMed:21787150). Acts upstream of ERN1, a transcriptional regulator required for nodulation (PubMed:17449807).</text>
</comment>
<comment type="subunit">
    <text evidence="4 5">Forms homodimers. Interacts with CCAMK.</text>
</comment>
<comment type="subcellular location">
    <subcellularLocation>
        <location evidence="4 6">Nucleus</location>
    </subcellularLocation>
</comment>
<comment type="tissue specificity">
    <text evidence="4">Highly expressed in roots. Expressed in root hairs and nodules. Not detected in leaves or flowers.</text>
</comment>
<comment type="disruption phenotype">
    <text evidence="5">No visible phenotype under normal growth conditions, but roots of mutant plants are impaired in the interaction with both rhizobia and the arbuscular mycorrhiza (AM) fungus Glomus intraradices. Stunted growth when grown in nitrogen-limiting conditions and in presence of Sinorhizobium meliloti.</text>
</comment>
<comment type="similarity">
    <text evidence="10">Belongs to the CYCLOPS family.</text>
</comment>
<proteinExistence type="evidence at protein level"/>